<accession>Q01892</accession>
<accession>A8K9C9</accession>
<accession>B4DUG6</accession>
<accession>Q15359</accession>
<comment type="function">
    <text evidence="4 7 8 10">Sequence specific transcriptional activator which binds to the PU-box, a purine-rich DNA sequence (5'-GAGGAA-3') that can act as a lymphoid-specific enhancer. Promotes development of plasmacytoid dendritic cells (pDCs), also known as type 2 DC precursors (pre-DC2) or natural interferon (IFN)-producing cells. These cells have the capacity to produce large amounts of interferon and block viral replication. May be required for B-cell receptor (BCR) signaling, which is necessary for normal B-cell development and antigenic stimulation.</text>
</comment>
<comment type="subunit">
    <text evidence="1 4 6">Can form homotypic interactions (PubMed:10196196). Interacts with IRF4/Pip (PubMed:10196196). Interacts with JUN (PubMed:10196196). Interacts with TBP (PubMed:10196196). May also interact with CREBBP and EP300 (PubMed:11864910). Interacts with NONO/p54(nrb) (By similarity).</text>
</comment>
<comment type="interaction">
    <interactant intactId="EBI-2800992">
        <id>Q01892</id>
    </interactant>
    <interactant intactId="EBI-466029">
        <id>P42858</id>
        <label>HTT</label>
    </interactant>
    <organismsDiffer>false</organismsDiffer>
    <experiments>18</experiments>
</comment>
<comment type="subcellular location">
    <molecule>Isoform 1</molecule>
    <subcellularLocation>
        <location evidence="7">Nucleus</location>
    </subcellularLocation>
</comment>
<comment type="subcellular location">
    <molecule>Isoform 2</molecule>
    <subcellularLocation>
        <location evidence="7">Cytoplasm</location>
    </subcellularLocation>
</comment>
<comment type="alternative products">
    <event type="alternative splicing"/>
    <isoform>
        <id>Q01892-1</id>
        <name>1</name>
        <sequence type="displayed"/>
    </isoform>
    <isoform>
        <id>Q01892-2</id>
        <name>2</name>
        <name>DeltaSpi-B</name>
        <sequence type="described" ref="VSP_001479 VSP_001480"/>
    </isoform>
    <isoform>
        <id>Q01892-3</id>
        <name>3</name>
        <sequence type="described" ref="VSP_045124 VSP_045125"/>
    </isoform>
</comment>
<comment type="tissue specificity">
    <text evidence="5 7">Expressed in plasmacytoid dendritic cells (pDCs) and B-cells, not expressed in T-cells or granulocytes. May also be enriched in stem cell populations of the liver.</text>
</comment>
<comment type="domain">
    <text evidence="4">The protein contains a weakly acidic N-terminal transactivation domain (TAD) followed by a second TAD rich in proline, serine and threonine. Each of these domains may be required for transcriptional activation of a subset of target genes.</text>
</comment>
<comment type="similarity">
    <text evidence="13">Belongs to the ETS family.</text>
</comment>
<proteinExistence type="evidence at protein level"/>
<sequence>MLALEAAQLDGPHFSCLYPDGVFYDLDSCKHSSYPDSEGAPDSLWDWTVAPPVPATPYEAFDPAAAAFSHPQAAQLCYEPPTYSPAGNLELAPSLEAPGPGLPAYPTENFASQTLVPPAYAPYPSPVLSEEEDLPLDSPALEVSDSESDEALVAGPEGKGSEAGTRKKLRLYQFLLGLLTRGDMRECVWWVEPGAGVFQFSSKHKELLARRWGQQKGNRKRMTYQKLARALRNYAKTGEIRKVKRKLTYQFDSALLPAVRRA</sequence>
<name>SPIB_HUMAN</name>
<organism>
    <name type="scientific">Homo sapiens</name>
    <name type="common">Human</name>
    <dbReference type="NCBI Taxonomy" id="9606"/>
    <lineage>
        <taxon>Eukaryota</taxon>
        <taxon>Metazoa</taxon>
        <taxon>Chordata</taxon>
        <taxon>Craniata</taxon>
        <taxon>Vertebrata</taxon>
        <taxon>Euteleostomi</taxon>
        <taxon>Mammalia</taxon>
        <taxon>Eutheria</taxon>
        <taxon>Euarchontoglires</taxon>
        <taxon>Primates</taxon>
        <taxon>Haplorrhini</taxon>
        <taxon>Catarrhini</taxon>
        <taxon>Hominidae</taxon>
        <taxon>Homo</taxon>
    </lineage>
</organism>
<gene>
    <name type="primary">SPIB</name>
</gene>
<keyword id="KW-0010">Activator</keyword>
<keyword id="KW-0025">Alternative splicing</keyword>
<keyword id="KW-0963">Cytoplasm</keyword>
<keyword id="KW-0238">DNA-binding</keyword>
<keyword id="KW-0539">Nucleus</keyword>
<keyword id="KW-1267">Proteomics identification</keyword>
<keyword id="KW-1185">Reference proteome</keyword>
<keyword id="KW-0804">Transcription</keyword>
<keyword id="KW-0805">Transcription regulation</keyword>
<feature type="chain" id="PRO_0000204136" description="Transcription factor Spi-B">
    <location>
        <begin position="1"/>
        <end position="262"/>
    </location>
</feature>
<feature type="DNA-binding region" description="ETS" evidence="2">
    <location>
        <begin position="169"/>
        <end position="252"/>
    </location>
</feature>
<feature type="region of interest" description="TAD1 (Acidic)" evidence="4">
    <location>
        <begin position="1"/>
        <end position="31"/>
    </location>
</feature>
<feature type="region of interest" description="TAD2" evidence="4">
    <location>
        <begin position="41"/>
        <end position="61"/>
    </location>
</feature>
<feature type="region of interest" description="Disordered" evidence="3">
    <location>
        <begin position="140"/>
        <end position="163"/>
    </location>
</feature>
<feature type="splice variant" id="VSP_045124" description="In isoform 3." evidence="11">
    <location>
        <begin position="1"/>
        <end position="91"/>
    </location>
</feature>
<feature type="splice variant" id="VSP_045125" description="In isoform 3." evidence="11">
    <original>APSLEAPGPGLPAYPTENFASQ</original>
    <variation>MASSMTWTAASIPATLIQRGLL</variation>
    <location>
        <begin position="92"/>
        <end position="113"/>
    </location>
</feature>
<feature type="splice variant" id="VSP_001479" description="In isoform 2." evidence="12">
    <original>AGTRKKLRLYQFLLG</original>
    <variation>GLARSCACTSSCWGY</variation>
    <location>
        <begin position="163"/>
        <end position="177"/>
    </location>
</feature>
<feature type="splice variant" id="VSP_001480" description="In isoform 2." evidence="12">
    <location>
        <begin position="178"/>
        <end position="262"/>
    </location>
</feature>
<feature type="sequence variant" id="VAR_061150" description="In dbSNP:rs11546996." evidence="9">
    <original>A</original>
    <variation>P</variation>
    <location>
        <position position="104"/>
    </location>
</feature>
<feature type="mutagenesis site" description="No effect on transcriptional activation." evidence="4">
    <original>S</original>
    <variation>A</variation>
    <location>
        <position position="37"/>
    </location>
</feature>
<feature type="mutagenesis site" description="No effect on transcriptional activation." evidence="4">
    <original>T</original>
    <variation>A</variation>
    <location>
        <position position="56"/>
    </location>
</feature>
<feature type="mutagenesis site" description="Reduces interaction with IRF4 and transcriptional activation." evidence="4">
    <original>S</original>
    <variation>A</variation>
    <location>
        <position position="144"/>
    </location>
</feature>
<feature type="mutagenesis site" description="Abrogates DNA-binding." evidence="4">
    <original>K</original>
    <variation>G</variation>
    <location>
        <position position="242"/>
    </location>
</feature>
<protein>
    <recommendedName>
        <fullName>Transcription factor Spi-B</fullName>
    </recommendedName>
</protein>
<evidence type="ECO:0000250" key="1">
    <source>
        <dbReference type="UniProtKB" id="O35906"/>
    </source>
</evidence>
<evidence type="ECO:0000255" key="2">
    <source>
        <dbReference type="PROSITE-ProRule" id="PRU00237"/>
    </source>
</evidence>
<evidence type="ECO:0000256" key="3">
    <source>
        <dbReference type="SAM" id="MobiDB-lite"/>
    </source>
</evidence>
<evidence type="ECO:0000269" key="4">
    <source>
    </source>
</evidence>
<evidence type="ECO:0000269" key="5">
    <source>
    </source>
</evidence>
<evidence type="ECO:0000269" key="6">
    <source>
    </source>
</evidence>
<evidence type="ECO:0000269" key="7">
    <source>
    </source>
</evidence>
<evidence type="ECO:0000269" key="8">
    <source>
    </source>
</evidence>
<evidence type="ECO:0000269" key="9">
    <source>
    </source>
</evidence>
<evidence type="ECO:0000269" key="10">
    <source>
    </source>
</evidence>
<evidence type="ECO:0000303" key="11">
    <source>
    </source>
</evidence>
<evidence type="ECO:0000303" key="12">
    <source>
    </source>
</evidence>
<evidence type="ECO:0000305" key="13"/>
<reference key="1">
    <citation type="journal article" date="1992" name="Mol. Cell. Biol.">
        <title>Characterization of Spi-B, a transcription factor related to the putative oncoprotein Spi-1/PU.1.</title>
        <authorList>
            <person name="Ray D."/>
            <person name="Bosselut R."/>
            <person name="Ghysdael J."/>
            <person name="Mattei M.-G."/>
            <person name="Tavitian A."/>
            <person name="Moreau-Gachelin F."/>
        </authorList>
    </citation>
    <scope>NUCLEOTIDE SEQUENCE [MRNA] (ISOFORM 1)</scope>
    <scope>FUNCTION</scope>
</reference>
<reference key="2">
    <citation type="journal article" date="1996" name="Biochem. Biophys. Res. Commun.">
        <title>An alternatively spliced isoform of the Spi-B transcription factor.</title>
        <authorList>
            <person name="Ray-Gallet D."/>
            <person name="Tavitian A."/>
            <person name="Moreau-Gachelin F."/>
        </authorList>
    </citation>
    <scope>NUCLEOTIDE SEQUENCE [MRNA] (ISOFORM 2)</scope>
</reference>
<reference key="3">
    <citation type="journal article" date="2004" name="Nat. Genet.">
        <title>Complete sequencing and characterization of 21,243 full-length human cDNAs.</title>
        <authorList>
            <person name="Ota T."/>
            <person name="Suzuki Y."/>
            <person name="Nishikawa T."/>
            <person name="Otsuki T."/>
            <person name="Sugiyama T."/>
            <person name="Irie R."/>
            <person name="Wakamatsu A."/>
            <person name="Hayashi K."/>
            <person name="Sato H."/>
            <person name="Nagai K."/>
            <person name="Kimura K."/>
            <person name="Makita H."/>
            <person name="Sekine M."/>
            <person name="Obayashi M."/>
            <person name="Nishi T."/>
            <person name="Shibahara T."/>
            <person name="Tanaka T."/>
            <person name="Ishii S."/>
            <person name="Yamamoto J."/>
            <person name="Saito K."/>
            <person name="Kawai Y."/>
            <person name="Isono Y."/>
            <person name="Nakamura Y."/>
            <person name="Nagahari K."/>
            <person name="Murakami K."/>
            <person name="Yasuda T."/>
            <person name="Iwayanagi T."/>
            <person name="Wagatsuma M."/>
            <person name="Shiratori A."/>
            <person name="Sudo H."/>
            <person name="Hosoiri T."/>
            <person name="Kaku Y."/>
            <person name="Kodaira H."/>
            <person name="Kondo H."/>
            <person name="Sugawara M."/>
            <person name="Takahashi M."/>
            <person name="Kanda K."/>
            <person name="Yokoi T."/>
            <person name="Furuya T."/>
            <person name="Kikkawa E."/>
            <person name="Omura Y."/>
            <person name="Abe K."/>
            <person name="Kamihara K."/>
            <person name="Katsuta N."/>
            <person name="Sato K."/>
            <person name="Tanikawa M."/>
            <person name="Yamazaki M."/>
            <person name="Ninomiya K."/>
            <person name="Ishibashi T."/>
            <person name="Yamashita H."/>
            <person name="Murakawa K."/>
            <person name="Fujimori K."/>
            <person name="Tanai H."/>
            <person name="Kimata M."/>
            <person name="Watanabe M."/>
            <person name="Hiraoka S."/>
            <person name="Chiba Y."/>
            <person name="Ishida S."/>
            <person name="Ono Y."/>
            <person name="Takiguchi S."/>
            <person name="Watanabe S."/>
            <person name="Yosida M."/>
            <person name="Hotuta T."/>
            <person name="Kusano J."/>
            <person name="Kanehori K."/>
            <person name="Takahashi-Fujii A."/>
            <person name="Hara H."/>
            <person name="Tanase T.-O."/>
            <person name="Nomura Y."/>
            <person name="Togiya S."/>
            <person name="Komai F."/>
            <person name="Hara R."/>
            <person name="Takeuchi K."/>
            <person name="Arita M."/>
            <person name="Imose N."/>
            <person name="Musashino K."/>
            <person name="Yuuki H."/>
            <person name="Oshima A."/>
            <person name="Sasaki N."/>
            <person name="Aotsuka S."/>
            <person name="Yoshikawa Y."/>
            <person name="Matsunawa H."/>
            <person name="Ichihara T."/>
            <person name="Shiohata N."/>
            <person name="Sano S."/>
            <person name="Moriya S."/>
            <person name="Momiyama H."/>
            <person name="Satoh N."/>
            <person name="Takami S."/>
            <person name="Terashima Y."/>
            <person name="Suzuki O."/>
            <person name="Nakagawa S."/>
            <person name="Senoh A."/>
            <person name="Mizoguchi H."/>
            <person name="Goto Y."/>
            <person name="Shimizu F."/>
            <person name="Wakebe H."/>
            <person name="Hishigaki H."/>
            <person name="Watanabe T."/>
            <person name="Sugiyama A."/>
            <person name="Takemoto M."/>
            <person name="Kawakami B."/>
            <person name="Yamazaki M."/>
            <person name="Watanabe K."/>
            <person name="Kumagai A."/>
            <person name="Itakura S."/>
            <person name="Fukuzumi Y."/>
            <person name="Fujimori Y."/>
            <person name="Komiyama M."/>
            <person name="Tashiro H."/>
            <person name="Tanigami A."/>
            <person name="Fujiwara T."/>
            <person name="Ono T."/>
            <person name="Yamada K."/>
            <person name="Fujii Y."/>
            <person name="Ozaki K."/>
            <person name="Hirao M."/>
            <person name="Ohmori Y."/>
            <person name="Kawabata A."/>
            <person name="Hikiji T."/>
            <person name="Kobatake N."/>
            <person name="Inagaki H."/>
            <person name="Ikema Y."/>
            <person name="Okamoto S."/>
            <person name="Okitani R."/>
            <person name="Kawakami T."/>
            <person name="Noguchi S."/>
            <person name="Itoh T."/>
            <person name="Shigeta K."/>
            <person name="Senba T."/>
            <person name="Matsumura K."/>
            <person name="Nakajima Y."/>
            <person name="Mizuno T."/>
            <person name="Morinaga M."/>
            <person name="Sasaki M."/>
            <person name="Togashi T."/>
            <person name="Oyama M."/>
            <person name="Hata H."/>
            <person name="Watanabe M."/>
            <person name="Komatsu T."/>
            <person name="Mizushima-Sugano J."/>
            <person name="Satoh T."/>
            <person name="Shirai Y."/>
            <person name="Takahashi Y."/>
            <person name="Nakagawa K."/>
            <person name="Okumura K."/>
            <person name="Nagase T."/>
            <person name="Nomura N."/>
            <person name="Kikuchi H."/>
            <person name="Masuho Y."/>
            <person name="Yamashita R."/>
            <person name="Nakai K."/>
            <person name="Yada T."/>
            <person name="Nakamura Y."/>
            <person name="Ohara O."/>
            <person name="Isogai T."/>
            <person name="Sugano S."/>
        </authorList>
    </citation>
    <scope>NUCLEOTIDE SEQUENCE [LARGE SCALE MRNA] (ISOFORMS 1 AND 3)</scope>
    <scope>VARIANT PRO-104</scope>
    <source>
        <tissue>Rectum</tissue>
        <tissue>Thymus</tissue>
    </source>
</reference>
<reference key="4">
    <citation type="journal article" date="2004" name="Nature">
        <title>The DNA sequence and biology of human chromosome 19.</title>
        <authorList>
            <person name="Grimwood J."/>
            <person name="Gordon L.A."/>
            <person name="Olsen A.S."/>
            <person name="Terry A."/>
            <person name="Schmutz J."/>
            <person name="Lamerdin J.E."/>
            <person name="Hellsten U."/>
            <person name="Goodstein D."/>
            <person name="Couronne O."/>
            <person name="Tran-Gyamfi M."/>
            <person name="Aerts A."/>
            <person name="Altherr M."/>
            <person name="Ashworth L."/>
            <person name="Bajorek E."/>
            <person name="Black S."/>
            <person name="Branscomb E."/>
            <person name="Caenepeel S."/>
            <person name="Carrano A.V."/>
            <person name="Caoile C."/>
            <person name="Chan Y.M."/>
            <person name="Christensen M."/>
            <person name="Cleland C.A."/>
            <person name="Copeland A."/>
            <person name="Dalin E."/>
            <person name="Dehal P."/>
            <person name="Denys M."/>
            <person name="Detter J.C."/>
            <person name="Escobar J."/>
            <person name="Flowers D."/>
            <person name="Fotopulos D."/>
            <person name="Garcia C."/>
            <person name="Georgescu A.M."/>
            <person name="Glavina T."/>
            <person name="Gomez M."/>
            <person name="Gonzales E."/>
            <person name="Groza M."/>
            <person name="Hammon N."/>
            <person name="Hawkins T."/>
            <person name="Haydu L."/>
            <person name="Ho I."/>
            <person name="Huang W."/>
            <person name="Israni S."/>
            <person name="Jett J."/>
            <person name="Kadner K."/>
            <person name="Kimball H."/>
            <person name="Kobayashi A."/>
            <person name="Larionov V."/>
            <person name="Leem S.-H."/>
            <person name="Lopez F."/>
            <person name="Lou Y."/>
            <person name="Lowry S."/>
            <person name="Malfatti S."/>
            <person name="Martinez D."/>
            <person name="McCready P.M."/>
            <person name="Medina C."/>
            <person name="Morgan J."/>
            <person name="Nelson K."/>
            <person name="Nolan M."/>
            <person name="Ovcharenko I."/>
            <person name="Pitluck S."/>
            <person name="Pollard M."/>
            <person name="Popkie A.P."/>
            <person name="Predki P."/>
            <person name="Quan G."/>
            <person name="Ramirez L."/>
            <person name="Rash S."/>
            <person name="Retterer J."/>
            <person name="Rodriguez A."/>
            <person name="Rogers S."/>
            <person name="Salamov A."/>
            <person name="Salazar A."/>
            <person name="She X."/>
            <person name="Smith D."/>
            <person name="Slezak T."/>
            <person name="Solovyev V."/>
            <person name="Thayer N."/>
            <person name="Tice H."/>
            <person name="Tsai M."/>
            <person name="Ustaszewska A."/>
            <person name="Vo N."/>
            <person name="Wagner M."/>
            <person name="Wheeler J."/>
            <person name="Wu K."/>
            <person name="Xie G."/>
            <person name="Yang J."/>
            <person name="Dubchak I."/>
            <person name="Furey T.S."/>
            <person name="DeJong P."/>
            <person name="Dickson M."/>
            <person name="Gordon D."/>
            <person name="Eichler E.E."/>
            <person name="Pennacchio L.A."/>
            <person name="Richardson P."/>
            <person name="Stubbs L."/>
            <person name="Rokhsar D.S."/>
            <person name="Myers R.M."/>
            <person name="Rubin E.M."/>
            <person name="Lucas S.M."/>
        </authorList>
    </citation>
    <scope>NUCLEOTIDE SEQUENCE [LARGE SCALE GENOMIC DNA]</scope>
</reference>
<reference key="5">
    <citation type="submission" date="2005-07" db="EMBL/GenBank/DDBJ databases">
        <authorList>
            <person name="Mural R.J."/>
            <person name="Istrail S."/>
            <person name="Sutton G.G."/>
            <person name="Florea L."/>
            <person name="Halpern A.L."/>
            <person name="Mobarry C.M."/>
            <person name="Lippert R."/>
            <person name="Walenz B."/>
            <person name="Shatkay H."/>
            <person name="Dew I."/>
            <person name="Miller J.R."/>
            <person name="Flanigan M.J."/>
            <person name="Edwards N.J."/>
            <person name="Bolanos R."/>
            <person name="Fasulo D."/>
            <person name="Halldorsson B.V."/>
            <person name="Hannenhalli S."/>
            <person name="Turner R."/>
            <person name="Yooseph S."/>
            <person name="Lu F."/>
            <person name="Nusskern D.R."/>
            <person name="Shue B.C."/>
            <person name="Zheng X.H."/>
            <person name="Zhong F."/>
            <person name="Delcher A.L."/>
            <person name="Huson D.H."/>
            <person name="Kravitz S.A."/>
            <person name="Mouchard L."/>
            <person name="Reinert K."/>
            <person name="Remington K.A."/>
            <person name="Clark A.G."/>
            <person name="Waterman M.S."/>
            <person name="Eichler E.E."/>
            <person name="Adams M.D."/>
            <person name="Hunkapiller M.W."/>
            <person name="Myers E.W."/>
            <person name="Venter J.C."/>
        </authorList>
    </citation>
    <scope>NUCLEOTIDE SEQUENCE [LARGE SCALE GENOMIC DNA]</scope>
</reference>
<reference key="6">
    <citation type="journal article" date="2004" name="Genome Res.">
        <title>The status, quality, and expansion of the NIH full-length cDNA project: the Mammalian Gene Collection (MGC).</title>
        <authorList>
            <consortium name="The MGC Project Team"/>
        </authorList>
    </citation>
    <scope>NUCLEOTIDE SEQUENCE [LARGE SCALE MRNA] (ISOFORM 1)</scope>
    <source>
        <tissue>B-cell</tissue>
    </source>
</reference>
<reference key="7">
    <citation type="journal article" date="1999" name="J. Biol. Chem.">
        <title>SPI-B activates transcription via a unique proline, serine, and threonine domain and exhibits DNA binding affinity differences from PU.1.</title>
        <authorList>
            <person name="Rao S."/>
            <person name="Matsumura A."/>
            <person name="Yoon J."/>
            <person name="Simon M.C."/>
        </authorList>
    </citation>
    <scope>FUNCTION</scope>
    <scope>INTERACTION WITH IRF4; JUN AND TBP</scope>
    <scope>HOMOMERIZATION</scope>
    <scope>DOMAINS PEST; TAD1 AND TAD2</scope>
    <scope>MUTAGENESIS OF SER-37; THR-56; SER-144 AND LYS-242</scope>
</reference>
<reference key="8">
    <citation type="journal article" date="2002" name="Br. J. Haematol.">
        <title>Expression of transcription factors Pu.1, Spi-B, Blimp-1, BSAP and oct-2 in normal human plasma cells and in multiple myeloma cells.</title>
        <authorList>
            <person name="Nagy M."/>
            <person name="Chapuis B."/>
            <person name="Matthes T."/>
        </authorList>
    </citation>
    <scope>TISSUE SPECIFICITY</scope>
</reference>
<reference key="9">
    <citation type="journal article" date="2002" name="Cell Growth Differ.">
        <title>Interaction between the hematopoietic Ets transcription factor Spi-B and the coactivator CREB-binding protein associated with negative cross-talk with c-Myb.</title>
        <authorList>
            <person name="Yamamoto H."/>
            <person name="Kihara-Negishi F."/>
            <person name="Yamada T."/>
            <person name="Suzuki M."/>
            <person name="Nakano T."/>
            <person name="Oikawa T."/>
        </authorList>
    </citation>
    <scope>INTERACTION WITH CREBBP AND EP300</scope>
</reference>
<reference key="10">
    <citation type="journal article" date="2003" name="Blood">
        <title>The transcription factor Spi-B is expressed in plasmacytoid DC precursors and inhibits T-, B-, and NK-cell development.</title>
        <authorList>
            <person name="Schotte R."/>
            <person name="Rissoan M.-C."/>
            <person name="Bendriss-Vermare N."/>
            <person name="Bridon J.-M."/>
            <person name="Duhen T."/>
            <person name="Weijer K."/>
            <person name="Briere F."/>
            <person name="Spits H."/>
        </authorList>
    </citation>
    <scope>FUNCTION</scope>
    <scope>SUBCELLULAR LOCATION</scope>
    <scope>TISSUE SPECIFICITY</scope>
</reference>
<reference key="11">
    <citation type="journal article" date="2004" name="J. Exp. Med.">
        <title>The ETS transcription factor Spi-B is required for human plasmacytoid dendritic cell development.</title>
        <authorList>
            <person name="Schotte R."/>
            <person name="Nagasawa M."/>
            <person name="Weijer K."/>
            <person name="Spits H."/>
            <person name="Blom B."/>
        </authorList>
    </citation>
    <scope>FUNCTION</scope>
</reference>
<dbReference type="EMBL" id="X66079">
    <property type="protein sequence ID" value="CAA46878.1"/>
    <property type="molecule type" value="mRNA"/>
</dbReference>
<dbReference type="EMBL" id="X96998">
    <property type="protein sequence ID" value="CAA65726.1"/>
    <property type="molecule type" value="mRNA"/>
</dbReference>
<dbReference type="EMBL" id="AK292644">
    <property type="protein sequence ID" value="BAF85333.1"/>
    <property type="molecule type" value="mRNA"/>
</dbReference>
<dbReference type="EMBL" id="AK300639">
    <property type="protein sequence ID" value="BAG62328.1"/>
    <property type="molecule type" value="mRNA"/>
</dbReference>
<dbReference type="EMBL" id="AC020909">
    <property type="status" value="NOT_ANNOTATED_CDS"/>
    <property type="molecule type" value="Genomic_DNA"/>
</dbReference>
<dbReference type="EMBL" id="CH471135">
    <property type="protein sequence ID" value="EAW71858.1"/>
    <property type="molecule type" value="Genomic_DNA"/>
</dbReference>
<dbReference type="EMBL" id="BC007921">
    <property type="protein sequence ID" value="AAH07921.1"/>
    <property type="molecule type" value="mRNA"/>
</dbReference>
<dbReference type="CCDS" id="CCDS33080.1">
    <molecule id="Q01892-1"/>
</dbReference>
<dbReference type="CCDS" id="CCDS58674.1">
    <molecule id="Q01892-3"/>
</dbReference>
<dbReference type="CCDS" id="CCDS59412.1">
    <molecule id="Q01892-2"/>
</dbReference>
<dbReference type="PIR" id="JC4839">
    <property type="entry name" value="JC4839"/>
</dbReference>
<dbReference type="PIR" id="S25655">
    <property type="entry name" value="S25655"/>
</dbReference>
<dbReference type="RefSeq" id="NP_001230927.1">
    <molecule id="Q01892-3"/>
    <property type="nucleotide sequence ID" value="NM_001243998.2"/>
</dbReference>
<dbReference type="RefSeq" id="NP_001230928.1">
    <molecule id="Q01892-2"/>
    <property type="nucleotide sequence ID" value="NM_001243999.2"/>
</dbReference>
<dbReference type="RefSeq" id="NP_001230929.1">
    <property type="nucleotide sequence ID" value="NM_001244000.1"/>
</dbReference>
<dbReference type="RefSeq" id="NP_003112.2">
    <molecule id="Q01892-1"/>
    <property type="nucleotide sequence ID" value="NM_003121.5"/>
</dbReference>
<dbReference type="SMR" id="Q01892"/>
<dbReference type="BioGRID" id="112567">
    <property type="interactions" value="16"/>
</dbReference>
<dbReference type="FunCoup" id="Q01892">
    <property type="interactions" value="563"/>
</dbReference>
<dbReference type="IntAct" id="Q01892">
    <property type="interactions" value="5"/>
</dbReference>
<dbReference type="STRING" id="9606.ENSP00000471921"/>
<dbReference type="iPTMnet" id="Q01892"/>
<dbReference type="BioMuta" id="SPIB"/>
<dbReference type="DMDM" id="548971"/>
<dbReference type="jPOST" id="Q01892"/>
<dbReference type="MassIVE" id="Q01892"/>
<dbReference type="PaxDb" id="9606-ENSP00000471921"/>
<dbReference type="PeptideAtlas" id="Q01892"/>
<dbReference type="ProteomicsDB" id="5187"/>
<dbReference type="ProteomicsDB" id="58013">
    <molecule id="Q01892-1"/>
</dbReference>
<dbReference type="Antibodypedia" id="71687">
    <property type="antibodies" value="186 antibodies from 29 providers"/>
</dbReference>
<dbReference type="DNASU" id="6689"/>
<dbReference type="Ensembl" id="ENST00000270632.7">
    <molecule id="Q01892-2"/>
    <property type="protein sequence ID" value="ENSP00000270632.7"/>
    <property type="gene ID" value="ENSG00000269404.7"/>
</dbReference>
<dbReference type="Ensembl" id="ENST00000439922.6">
    <molecule id="Q01892-3"/>
    <property type="protein sequence ID" value="ENSP00000391877.2"/>
    <property type="gene ID" value="ENSG00000269404.7"/>
</dbReference>
<dbReference type="Ensembl" id="ENST00000595883.6">
    <molecule id="Q01892-1"/>
    <property type="protein sequence ID" value="ENSP00000471921.1"/>
    <property type="gene ID" value="ENSG00000269404.7"/>
</dbReference>
<dbReference type="GeneID" id="6689"/>
<dbReference type="KEGG" id="hsa:6689"/>
<dbReference type="MANE-Select" id="ENST00000595883.6">
    <property type="protein sequence ID" value="ENSP00000471921.1"/>
    <property type="RefSeq nucleotide sequence ID" value="NM_003121.5"/>
    <property type="RefSeq protein sequence ID" value="NP_003112.2"/>
</dbReference>
<dbReference type="UCSC" id="uc002psd.4">
    <molecule id="Q01892-1"/>
    <property type="organism name" value="human"/>
</dbReference>
<dbReference type="AGR" id="HGNC:11242"/>
<dbReference type="CTD" id="6689"/>
<dbReference type="DisGeNET" id="6689"/>
<dbReference type="GeneCards" id="SPIB"/>
<dbReference type="HGNC" id="HGNC:11242">
    <property type="gene designation" value="SPIB"/>
</dbReference>
<dbReference type="HPA" id="ENSG00000269404">
    <property type="expression patterns" value="Group enriched (intestine, lymphoid tissue)"/>
</dbReference>
<dbReference type="MalaCards" id="SPIB"/>
<dbReference type="MIM" id="606802">
    <property type="type" value="gene"/>
</dbReference>
<dbReference type="neXtProt" id="NX_Q01892"/>
<dbReference type="OpenTargets" id="ENSG00000269404"/>
<dbReference type="Orphanet" id="186">
    <property type="disease" value="Primary biliary cholangitis"/>
</dbReference>
<dbReference type="PharmGKB" id="PA36072"/>
<dbReference type="VEuPathDB" id="HostDB:ENSG00000269404"/>
<dbReference type="eggNOG" id="KOG3805">
    <property type="taxonomic scope" value="Eukaryota"/>
</dbReference>
<dbReference type="GeneTree" id="ENSGT00940000162754"/>
<dbReference type="HOGENOM" id="CLU_066451_2_0_1"/>
<dbReference type="InParanoid" id="Q01892"/>
<dbReference type="OMA" id="CKHPSYP"/>
<dbReference type="OrthoDB" id="10043646at2759"/>
<dbReference type="PAN-GO" id="Q01892">
    <property type="GO annotations" value="4 GO annotations based on evolutionary models"/>
</dbReference>
<dbReference type="PhylomeDB" id="Q01892"/>
<dbReference type="TreeFam" id="TF352494"/>
<dbReference type="PathwayCommons" id="Q01892"/>
<dbReference type="SignaLink" id="Q01892"/>
<dbReference type="SIGNOR" id="Q01892"/>
<dbReference type="BioGRID-ORCS" id="6689">
    <property type="hits" value="16 hits in 1167 CRISPR screens"/>
</dbReference>
<dbReference type="ChiTaRS" id="SPIB">
    <property type="organism name" value="human"/>
</dbReference>
<dbReference type="GeneWiki" id="SPIB"/>
<dbReference type="GenomeRNAi" id="6689"/>
<dbReference type="Pharos" id="Q01892">
    <property type="development level" value="Tbio"/>
</dbReference>
<dbReference type="PRO" id="PR:Q01892"/>
<dbReference type="Proteomes" id="UP000005640">
    <property type="component" value="Chromosome 19"/>
</dbReference>
<dbReference type="RNAct" id="Q01892">
    <property type="molecule type" value="protein"/>
</dbReference>
<dbReference type="Bgee" id="ENSG00000269404">
    <property type="expression patterns" value="Expressed in lymph node and 132 other cell types or tissues"/>
</dbReference>
<dbReference type="ExpressionAtlas" id="Q01892">
    <property type="expression patterns" value="baseline and differential"/>
</dbReference>
<dbReference type="GO" id="GO:0000785">
    <property type="term" value="C:chromatin"/>
    <property type="evidence" value="ECO:0000247"/>
    <property type="project" value="NTNU_SB"/>
</dbReference>
<dbReference type="GO" id="GO:0005737">
    <property type="term" value="C:cytoplasm"/>
    <property type="evidence" value="ECO:0000304"/>
    <property type="project" value="UniProtKB"/>
</dbReference>
<dbReference type="GO" id="GO:0005634">
    <property type="term" value="C:nucleus"/>
    <property type="evidence" value="ECO:0000318"/>
    <property type="project" value="GO_Central"/>
</dbReference>
<dbReference type="GO" id="GO:0001228">
    <property type="term" value="F:DNA-binding transcription activator activity, RNA polymerase II-specific"/>
    <property type="evidence" value="ECO:0000315"/>
    <property type="project" value="NTNU_SB"/>
</dbReference>
<dbReference type="GO" id="GO:0000981">
    <property type="term" value="F:DNA-binding transcription factor activity, RNA polymerase II-specific"/>
    <property type="evidence" value="ECO:0000247"/>
    <property type="project" value="NTNU_SB"/>
</dbReference>
<dbReference type="GO" id="GO:0000978">
    <property type="term" value="F:RNA polymerase II cis-regulatory region sequence-specific DNA binding"/>
    <property type="evidence" value="ECO:0000315"/>
    <property type="project" value="NTNU_SB"/>
</dbReference>
<dbReference type="GO" id="GO:1990837">
    <property type="term" value="F:sequence-specific double-stranded DNA binding"/>
    <property type="evidence" value="ECO:0000314"/>
    <property type="project" value="ARUK-UCL"/>
</dbReference>
<dbReference type="GO" id="GO:0030154">
    <property type="term" value="P:cell differentiation"/>
    <property type="evidence" value="ECO:0000318"/>
    <property type="project" value="GO_Central"/>
</dbReference>
<dbReference type="GO" id="GO:0002327">
    <property type="term" value="P:immature B cell differentiation"/>
    <property type="evidence" value="ECO:0007669"/>
    <property type="project" value="Ensembl"/>
</dbReference>
<dbReference type="GO" id="GO:0030225">
    <property type="term" value="P:macrophage differentiation"/>
    <property type="evidence" value="ECO:0007669"/>
    <property type="project" value="Ensembl"/>
</dbReference>
<dbReference type="GO" id="GO:0045944">
    <property type="term" value="P:positive regulation of transcription by RNA polymerase II"/>
    <property type="evidence" value="ECO:0000315"/>
    <property type="project" value="NTNU_SB"/>
</dbReference>
<dbReference type="GO" id="GO:0006357">
    <property type="term" value="P:regulation of transcription by RNA polymerase II"/>
    <property type="evidence" value="ECO:0000318"/>
    <property type="project" value="GO_Central"/>
</dbReference>
<dbReference type="FunFam" id="1.10.10.10:FF:000250">
    <property type="entry name" value="transcription factor Spi-B isoform X1"/>
    <property type="match status" value="1"/>
</dbReference>
<dbReference type="Gene3D" id="1.10.10.10">
    <property type="entry name" value="Winged helix-like DNA-binding domain superfamily/Winged helix DNA-binding domain"/>
    <property type="match status" value="1"/>
</dbReference>
<dbReference type="InterPro" id="IPR000418">
    <property type="entry name" value="Ets_dom"/>
</dbReference>
<dbReference type="InterPro" id="IPR046328">
    <property type="entry name" value="ETS_fam"/>
</dbReference>
<dbReference type="InterPro" id="IPR036388">
    <property type="entry name" value="WH-like_DNA-bd_sf"/>
</dbReference>
<dbReference type="InterPro" id="IPR036390">
    <property type="entry name" value="WH_DNA-bd_sf"/>
</dbReference>
<dbReference type="PANTHER" id="PTHR11849">
    <property type="entry name" value="ETS"/>
    <property type="match status" value="1"/>
</dbReference>
<dbReference type="PANTHER" id="PTHR11849:SF174">
    <property type="entry name" value="TRANSCRIPTION FACTOR SPI-B"/>
    <property type="match status" value="1"/>
</dbReference>
<dbReference type="Pfam" id="PF00178">
    <property type="entry name" value="Ets"/>
    <property type="match status" value="1"/>
</dbReference>
<dbReference type="PRINTS" id="PR00454">
    <property type="entry name" value="ETSDOMAIN"/>
</dbReference>
<dbReference type="SMART" id="SM00413">
    <property type="entry name" value="ETS"/>
    <property type="match status" value="1"/>
</dbReference>
<dbReference type="SUPFAM" id="SSF46785">
    <property type="entry name" value="Winged helix' DNA-binding domain"/>
    <property type="match status" value="1"/>
</dbReference>
<dbReference type="PROSITE" id="PS00345">
    <property type="entry name" value="ETS_DOMAIN_1"/>
    <property type="match status" value="1"/>
</dbReference>
<dbReference type="PROSITE" id="PS00346">
    <property type="entry name" value="ETS_DOMAIN_2"/>
    <property type="match status" value="1"/>
</dbReference>
<dbReference type="PROSITE" id="PS50061">
    <property type="entry name" value="ETS_DOMAIN_3"/>
    <property type="match status" value="1"/>
</dbReference>